<name>SLT_SALTY</name>
<dbReference type="EC" id="4.2.2.n1"/>
<dbReference type="EMBL" id="AE006468">
    <property type="protein sequence ID" value="AAL23397.1"/>
    <property type="status" value="ALT_INIT"/>
    <property type="molecule type" value="Genomic_DNA"/>
</dbReference>
<dbReference type="RefSeq" id="NP_463438.3">
    <property type="nucleotide sequence ID" value="NC_003197.2"/>
</dbReference>
<dbReference type="SMR" id="P39434"/>
<dbReference type="STRING" id="99287.STM4582"/>
<dbReference type="CAZy" id="GH23">
    <property type="family name" value="Glycoside Hydrolase Family 23"/>
</dbReference>
<dbReference type="PaxDb" id="99287-STM4582"/>
<dbReference type="GeneID" id="1256108"/>
<dbReference type="KEGG" id="stm:STM4582"/>
<dbReference type="PATRIC" id="fig|99287.12.peg.4825"/>
<dbReference type="HOGENOM" id="CLU_019016_1_1_6"/>
<dbReference type="OMA" id="RQESAFM"/>
<dbReference type="PhylomeDB" id="P39434"/>
<dbReference type="Proteomes" id="UP000001014">
    <property type="component" value="Chromosome"/>
</dbReference>
<dbReference type="GO" id="GO:0016020">
    <property type="term" value="C:membrane"/>
    <property type="evidence" value="ECO:0007669"/>
    <property type="project" value="InterPro"/>
</dbReference>
<dbReference type="GO" id="GO:0042597">
    <property type="term" value="C:periplasmic space"/>
    <property type="evidence" value="ECO:0007669"/>
    <property type="project" value="UniProtKB-SubCell"/>
</dbReference>
<dbReference type="GO" id="GO:0004553">
    <property type="term" value="F:hydrolase activity, hydrolyzing O-glycosyl compounds"/>
    <property type="evidence" value="ECO:0007669"/>
    <property type="project" value="InterPro"/>
</dbReference>
<dbReference type="GO" id="GO:0008933">
    <property type="term" value="F:peptidoglycan lytic transglycosylase activity"/>
    <property type="evidence" value="ECO:0007669"/>
    <property type="project" value="InterPro"/>
</dbReference>
<dbReference type="GO" id="GO:0071555">
    <property type="term" value="P:cell wall organization"/>
    <property type="evidence" value="ECO:0007669"/>
    <property type="project" value="UniProtKB-KW"/>
</dbReference>
<dbReference type="GO" id="GO:0000270">
    <property type="term" value="P:peptidoglycan metabolic process"/>
    <property type="evidence" value="ECO:0007669"/>
    <property type="project" value="InterPro"/>
</dbReference>
<dbReference type="CDD" id="cd13401">
    <property type="entry name" value="Slt70-like"/>
    <property type="match status" value="1"/>
</dbReference>
<dbReference type="FunFam" id="1.10.530.10:FF:000011">
    <property type="entry name" value="Soluble lytic murein transglycosylase"/>
    <property type="match status" value="1"/>
</dbReference>
<dbReference type="FunFam" id="1.25.20.10:FF:000001">
    <property type="entry name" value="Soluble lytic murein transglycosylase"/>
    <property type="match status" value="1"/>
</dbReference>
<dbReference type="Gene3D" id="1.10.530.10">
    <property type="match status" value="1"/>
</dbReference>
<dbReference type="Gene3D" id="1.25.20.10">
    <property type="entry name" value="Bacterial muramidases"/>
    <property type="match status" value="1"/>
</dbReference>
<dbReference type="Gene3D" id="1.10.1240.20">
    <property type="entry name" value="Lytic transglycosylase, superhelical linker domain"/>
    <property type="match status" value="1"/>
</dbReference>
<dbReference type="InterPro" id="IPR023346">
    <property type="entry name" value="Lysozyme-like_dom_sf"/>
</dbReference>
<dbReference type="InterPro" id="IPR037061">
    <property type="entry name" value="Lytic_TGlycoase_superhlx_L_sf"/>
</dbReference>
<dbReference type="InterPro" id="IPR012289">
    <property type="entry name" value="Lytic_TGlycosylase_superhlx_L"/>
</dbReference>
<dbReference type="InterPro" id="IPR008939">
    <property type="entry name" value="Lytic_TGlycosylase_superhlx_U"/>
</dbReference>
<dbReference type="InterPro" id="IPR000189">
    <property type="entry name" value="Transglyc_AS"/>
</dbReference>
<dbReference type="InterPro" id="IPR008258">
    <property type="entry name" value="Transglycosylase_SLT_dom_1"/>
</dbReference>
<dbReference type="NCBIfam" id="NF008631">
    <property type="entry name" value="PRK11619.1"/>
    <property type="match status" value="1"/>
</dbReference>
<dbReference type="PANTHER" id="PTHR37423:SF5">
    <property type="entry name" value="SOLUBLE LYTIC MUREIN TRANSGLYCOSYLASE"/>
    <property type="match status" value="1"/>
</dbReference>
<dbReference type="PANTHER" id="PTHR37423">
    <property type="entry name" value="SOLUBLE LYTIC MUREIN TRANSGLYCOSYLASE-RELATED"/>
    <property type="match status" value="1"/>
</dbReference>
<dbReference type="Pfam" id="PF01464">
    <property type="entry name" value="SLT"/>
    <property type="match status" value="1"/>
</dbReference>
<dbReference type="Pfam" id="PF14718">
    <property type="entry name" value="SLT_L"/>
    <property type="match status" value="1"/>
</dbReference>
<dbReference type="SUPFAM" id="SSF48435">
    <property type="entry name" value="Bacterial muramidases"/>
    <property type="match status" value="1"/>
</dbReference>
<dbReference type="SUPFAM" id="SSF53955">
    <property type="entry name" value="Lysozyme-like"/>
    <property type="match status" value="1"/>
</dbReference>
<dbReference type="PROSITE" id="PS00922">
    <property type="entry name" value="TRANSGLYCOSYLASE"/>
    <property type="match status" value="1"/>
</dbReference>
<comment type="function">
    <text evidence="1">Murein-degrading enzyme. Catalyzes the cleavage of the glycosidic bonds between N-acetylmuramic acid and N-acetylglucosamine residues in peptidoglycan. May play a role in recycling of muropeptides during cell elongation and/or cell division (By similarity).</text>
</comment>
<comment type="catalytic activity">
    <reaction>
        <text>Exolytic cleavage of the (1-&gt;4)-beta-glycosidic linkage between N-acetylmuramic acid (MurNAc) and N-acetylglucosamine (GlcNAc) residues in peptidoglycan, from either the reducing or the non-reducing ends of the peptidoglycan chains, with concomitant formation of a 1,6-anhydrobond in the MurNAc residue.</text>
        <dbReference type="EC" id="4.2.2.n1"/>
    </reaction>
</comment>
<comment type="subcellular location">
    <subcellularLocation>
        <location evidence="4">Periplasm</location>
    </subcellularLocation>
</comment>
<comment type="similarity">
    <text evidence="4">Belongs to the transglycosylase Slt family.</text>
</comment>
<comment type="sequence caution" evidence="4">
    <conflict type="erroneous initiation">
        <sequence resource="EMBL-CDS" id="AAL23397"/>
    </conflict>
</comment>
<protein>
    <recommendedName>
        <fullName>Soluble lytic murein transglycosylase</fullName>
        <ecNumber>4.2.2.n1</ecNumber>
    </recommendedName>
    <alternativeName>
        <fullName>Peptidoglycan lytic exotransglycosylase</fullName>
    </alternativeName>
    <alternativeName>
        <fullName>Slt70</fullName>
    </alternativeName>
</protein>
<proteinExistence type="inferred from homology"/>
<organism>
    <name type="scientific">Salmonella typhimurium (strain LT2 / SGSC1412 / ATCC 700720)</name>
    <dbReference type="NCBI Taxonomy" id="99287"/>
    <lineage>
        <taxon>Bacteria</taxon>
        <taxon>Pseudomonadati</taxon>
        <taxon>Pseudomonadota</taxon>
        <taxon>Gammaproteobacteria</taxon>
        <taxon>Enterobacterales</taxon>
        <taxon>Enterobacteriaceae</taxon>
        <taxon>Salmonella</taxon>
    </lineage>
</organism>
<sequence length="645" mass="73620">MDRAKPFVWRLVAASVCLLTFCHLARADSLEEQRNRYAQIKQAWDNRQMDVVEQMMPGLKDYPLYPYLEYRKITDDLMNQPAIAVTQFVRANPTLPPARTLQSRFVNELARREDWRGLLAFSPEKPGTTEAQCNYYYAKWSTGQTEAAWQGAKDLWLTGKSQPNACDKLFSVWRASGKQDPLAYLERIRLAMKAGNTGLVTVLAGQMPAEYQTIASAIITLANDPNNVLIFARTTGATDFTRQMAEVAFASVARQDAENARLMIPSLVQAQKLNEEQTQALRDIVAWRLMGNDVTDAQAKWRDDAIMRSQSTSLIERRVRMALGMGDRRGLNTWLARLPMEAKEKDEWRYWQADLLLERGRDAEAKEILHALMQKRGFYPMVAAQRLGEEYTLKIDKAPANVNSALTQGPEMARVRELMYWNLDNTARSEWANLVKSRSKSEQAQLARYAFNQHWWDLSVQATIAGKLWDHLEERFPLAYNDLFTRYTRGKDISQSYAMAIARQESAWNPKVKSPVGASGLMQIMPGTATHTVKMFSIPDYRGPGQLLEPETNINIGTSYLQYVYQQFGNNRIFASAAYNAGPGRVRTWLGNSAGRIDAVAFVESIPFSETRGYVKNVLAYDAYYRHFMGQKEALMSDSEWQRRY</sequence>
<evidence type="ECO:0000250" key="1"/>
<evidence type="ECO:0000255" key="2"/>
<evidence type="ECO:0000255" key="3">
    <source>
        <dbReference type="PROSITE-ProRule" id="PRU10071"/>
    </source>
</evidence>
<evidence type="ECO:0000305" key="4"/>
<keyword id="KW-0961">Cell wall biogenesis/degradation</keyword>
<keyword id="KW-1015">Disulfide bond</keyword>
<keyword id="KW-0456">Lyase</keyword>
<keyword id="KW-0574">Periplasm</keyword>
<keyword id="KW-1185">Reference proteome</keyword>
<keyword id="KW-0732">Signal</keyword>
<reference key="1">
    <citation type="journal article" date="2001" name="Nature">
        <title>Complete genome sequence of Salmonella enterica serovar Typhimurium LT2.</title>
        <authorList>
            <person name="McClelland M."/>
            <person name="Sanderson K.E."/>
            <person name="Spieth J."/>
            <person name="Clifton S.W."/>
            <person name="Latreille P."/>
            <person name="Courtney L."/>
            <person name="Porwollik S."/>
            <person name="Ali J."/>
            <person name="Dante M."/>
            <person name="Du F."/>
            <person name="Hou S."/>
            <person name="Layman D."/>
            <person name="Leonard S."/>
            <person name="Nguyen C."/>
            <person name="Scott K."/>
            <person name="Holmes A."/>
            <person name="Grewal N."/>
            <person name="Mulvaney E."/>
            <person name="Ryan E."/>
            <person name="Sun H."/>
            <person name="Florea L."/>
            <person name="Miller W."/>
            <person name="Stoneking T."/>
            <person name="Nhan M."/>
            <person name="Waterston R."/>
            <person name="Wilson R.K."/>
        </authorList>
    </citation>
    <scope>NUCLEOTIDE SEQUENCE [LARGE SCALE GENOMIC DNA]</scope>
    <source>
        <strain>LT2 / SGSC1412 / ATCC 700720</strain>
    </source>
</reference>
<accession>P39434</accession>
<gene>
    <name type="primary">slt</name>
    <name type="ordered locus">STM4582</name>
</gene>
<feature type="signal peptide" evidence="2">
    <location>
        <begin position="1"/>
        <end position="27"/>
    </location>
</feature>
<feature type="chain" id="PRO_0000032779" description="Soluble lytic murein transglycosylase">
    <location>
        <begin position="28"/>
        <end position="645"/>
    </location>
</feature>
<feature type="region of interest" description="Slt-type domain">
    <location>
        <begin position="492"/>
        <end position="582"/>
    </location>
</feature>
<feature type="active site" evidence="3">
    <location>
        <position position="505"/>
    </location>
</feature>
<feature type="disulfide bond" evidence="1">
    <location>
        <begin position="133"/>
        <end position="166"/>
    </location>
</feature>